<name>Y017_HVAVE</name>
<evidence type="ECO:0000255" key="1"/>
<evidence type="ECO:0000305" key="2"/>
<organism>
    <name type="scientific">Heliothis virescens ascovirus 3e</name>
    <name type="common">HvAV-3e</name>
    <dbReference type="NCBI Taxonomy" id="260797"/>
    <lineage>
        <taxon>Viruses</taxon>
        <taxon>Varidnaviria</taxon>
        <taxon>Bamfordvirae</taxon>
        <taxon>Nucleocytoviricota</taxon>
        <taxon>Megaviricetes</taxon>
        <taxon>Pimascovirales</taxon>
        <taxon>Ascoviridae</taxon>
        <taxon>Ascovirus</taxon>
        <taxon>Ascovirus TnAV2a</taxon>
    </lineage>
</organism>
<sequence length="376" mass="41350">MVATGRIIITLLAAALDEIILASKITQEAYDSDFSSPRYALTGSLAESVYGKQCYGDCVNYTCVVSRTGSLDPCLYTTKSIRIVHPAAKVLQKRETFCRSACITDDTVPWCIIDRYGTVDLCEPIKPNRKQPSLAVELSVDGKHPTGRTTTCSTRCKYRPSNEGSIGHRCVVRNGMNYAEWACSPNPVIMPPAIPTYNNAGSLDGLTECNLKTGLRIGLTIGDNEYSDSTNVSSGIAVLDYDGAVISIMTAYKQYITYVDAKEKPLTTLGILNTADDVGTKMVVYAMARVTAESVESLHKSLLNVLGDYSLPNGFGRFQRGLSGWLIGGHKYRNIEIKMLIHRRENNTEVEAISVDLKFRHGRYRLMNSCKGLIIL</sequence>
<organismHost>
    <name type="scientific">Noctuidae</name>
    <name type="common">owlet moths</name>
    <dbReference type="NCBI Taxonomy" id="7100"/>
</organismHost>
<keyword id="KW-1185">Reference proteome</keyword>
<keyword id="KW-0732">Signal</keyword>
<gene>
    <name type="ORF">ORF17</name>
</gene>
<accession>A4KX72</accession>
<protein>
    <recommendedName>
        <fullName>Uncharacterized protein ORF17</fullName>
    </recommendedName>
</protein>
<dbReference type="EMBL" id="EF133465">
    <property type="protein sequence ID" value="ABO37203.1"/>
    <property type="molecule type" value="Genomic_DNA"/>
</dbReference>
<dbReference type="RefSeq" id="YP_001110869.1">
    <property type="nucleotide sequence ID" value="NC_009233.1"/>
</dbReference>
<dbReference type="KEGG" id="vg:5076064"/>
<dbReference type="OrthoDB" id="35229at10239"/>
<dbReference type="Proteomes" id="UP000001324">
    <property type="component" value="Genome"/>
</dbReference>
<feature type="signal peptide" evidence="1">
    <location>
        <begin position="1"/>
        <end position="22"/>
    </location>
</feature>
<feature type="chain" id="PRO_0000330598" description="Uncharacterized protein ORF17">
    <location>
        <begin position="23"/>
        <end position="376"/>
    </location>
</feature>
<proteinExistence type="inferred from homology"/>
<reference key="1">
    <citation type="journal article" date="2007" name="J. Gen. Virol.">
        <title>Sequence and organization of the Heliothis virescens ascovirus genome.</title>
        <authorList>
            <person name="Asgari S."/>
            <person name="Davis J."/>
            <person name="Wood D."/>
            <person name="Wilson P."/>
            <person name="McGrath A."/>
        </authorList>
    </citation>
    <scope>NUCLEOTIDE SEQUENCE [LARGE SCALE GENOMIC DNA]</scope>
</reference>
<comment type="similarity">
    <text evidence="2">Belongs to the ascovirus HvAV ORF17 family.</text>
</comment>